<keyword id="KW-0067">ATP-binding</keyword>
<keyword id="KW-0963">Cytoplasm</keyword>
<keyword id="KW-0547">Nucleotide-binding</keyword>
<keyword id="KW-0548">Nucleotidyltransferase</keyword>
<keyword id="KW-0808">Transferase</keyword>
<keyword id="KW-0819">tRNA processing</keyword>
<protein>
    <recommendedName>
        <fullName evidence="1">Threonylcarbamoyl-AMP synthase</fullName>
        <shortName evidence="1">TC-AMP synthase</shortName>
        <ecNumber evidence="1">2.7.7.87</ecNumber>
    </recommendedName>
    <alternativeName>
        <fullName evidence="1">L-threonylcarbamoyladenylate synthase</fullName>
    </alternativeName>
    <alternativeName>
        <fullName evidence="1">t(6)A37 threonylcarbamoyladenosine biosynthesis protein TsaC</fullName>
    </alternativeName>
    <alternativeName>
        <fullName evidence="1">tRNA threonylcarbamoyladenosine biosynthesis protein TsaC</fullName>
    </alternativeName>
</protein>
<reference key="1">
    <citation type="journal article" date="2000" name="Nature">
        <title>Complete DNA sequence of a serogroup A strain of Neisseria meningitidis Z2491.</title>
        <authorList>
            <person name="Parkhill J."/>
            <person name="Achtman M."/>
            <person name="James K.D."/>
            <person name="Bentley S.D."/>
            <person name="Churcher C.M."/>
            <person name="Klee S.R."/>
            <person name="Morelli G."/>
            <person name="Basham D."/>
            <person name="Brown D."/>
            <person name="Chillingworth T."/>
            <person name="Davies R.M."/>
            <person name="Davis P."/>
            <person name="Devlin K."/>
            <person name="Feltwell T."/>
            <person name="Hamlin N."/>
            <person name="Holroyd S."/>
            <person name="Jagels K."/>
            <person name="Leather S."/>
            <person name="Moule S."/>
            <person name="Mungall K.L."/>
            <person name="Quail M.A."/>
            <person name="Rajandream M.A."/>
            <person name="Rutherford K.M."/>
            <person name="Simmonds M."/>
            <person name="Skelton J."/>
            <person name="Whitehead S."/>
            <person name="Spratt B.G."/>
            <person name="Barrell B.G."/>
        </authorList>
    </citation>
    <scope>NUCLEOTIDE SEQUENCE [LARGE SCALE GENOMIC DNA]</scope>
    <source>
        <strain>DSM 15465 / Z2491</strain>
    </source>
</reference>
<evidence type="ECO:0000255" key="1">
    <source>
        <dbReference type="HAMAP-Rule" id="MF_01852"/>
    </source>
</evidence>
<evidence type="ECO:0000305" key="2"/>
<feature type="chain" id="PRO_0000352938" description="Threonylcarbamoyl-AMP synthase">
    <location>
        <begin position="1"/>
        <end position="189"/>
    </location>
</feature>
<feature type="domain" description="YrdC-like" evidence="1">
    <location>
        <begin position="9"/>
        <end position="189"/>
    </location>
</feature>
<sequence length="189" mass="21106">MLFPRIIAASAQRKLSVYLKKGGLVAYPTESCYGLGCLPTLAKALGKLAHLKKRPQHKGMIVIGNQFEQLQPLLQMPSENLQDMLRKEWPAPKTFLLSAKSCVLPELRGKQRSKLAVRVPAHVGARRLCQALQTPLVSTSCNRAGKRACRTEREVRRQFGRDVWIVGGRIGRQKSPSQIIDGETGKRLR</sequence>
<gene>
    <name evidence="1" type="primary">tsaC</name>
    <name type="synonym">rimN</name>
    <name type="ordered locus">NMA0237</name>
</gene>
<dbReference type="EC" id="2.7.7.87" evidence="1"/>
<dbReference type="EMBL" id="AL157959">
    <property type="protein sequence ID" value="CAM07543.1"/>
    <property type="status" value="ALT_INIT"/>
    <property type="molecule type" value="Genomic_DNA"/>
</dbReference>
<dbReference type="PIR" id="A82018">
    <property type="entry name" value="A82018"/>
</dbReference>
<dbReference type="SMR" id="A1IP83"/>
<dbReference type="EnsemblBacteria" id="CAM07543">
    <property type="protein sequence ID" value="CAM07543"/>
    <property type="gene ID" value="NMA0237"/>
</dbReference>
<dbReference type="KEGG" id="nma:NMA0237"/>
<dbReference type="HOGENOM" id="CLU_031397_6_1_4"/>
<dbReference type="Proteomes" id="UP000000626">
    <property type="component" value="Chromosome"/>
</dbReference>
<dbReference type="GO" id="GO:0005737">
    <property type="term" value="C:cytoplasm"/>
    <property type="evidence" value="ECO:0007669"/>
    <property type="project" value="UniProtKB-SubCell"/>
</dbReference>
<dbReference type="GO" id="GO:0005524">
    <property type="term" value="F:ATP binding"/>
    <property type="evidence" value="ECO:0007669"/>
    <property type="project" value="UniProtKB-UniRule"/>
</dbReference>
<dbReference type="GO" id="GO:0003725">
    <property type="term" value="F:double-stranded RNA binding"/>
    <property type="evidence" value="ECO:0007669"/>
    <property type="project" value="InterPro"/>
</dbReference>
<dbReference type="GO" id="GO:0061710">
    <property type="term" value="F:L-threonylcarbamoyladenylate synthase"/>
    <property type="evidence" value="ECO:0007669"/>
    <property type="project" value="UniProtKB-EC"/>
</dbReference>
<dbReference type="GO" id="GO:0000049">
    <property type="term" value="F:tRNA binding"/>
    <property type="evidence" value="ECO:0007669"/>
    <property type="project" value="TreeGrafter"/>
</dbReference>
<dbReference type="GO" id="GO:0006450">
    <property type="term" value="P:regulation of translational fidelity"/>
    <property type="evidence" value="ECO:0007669"/>
    <property type="project" value="TreeGrafter"/>
</dbReference>
<dbReference type="GO" id="GO:0002949">
    <property type="term" value="P:tRNA threonylcarbamoyladenosine modification"/>
    <property type="evidence" value="ECO:0007669"/>
    <property type="project" value="UniProtKB-UniRule"/>
</dbReference>
<dbReference type="FunFam" id="3.90.870.10:FF:000004">
    <property type="entry name" value="Threonylcarbamoyl-AMP synthase"/>
    <property type="match status" value="1"/>
</dbReference>
<dbReference type="Gene3D" id="3.90.870.10">
    <property type="entry name" value="DHBP synthase"/>
    <property type="match status" value="1"/>
</dbReference>
<dbReference type="HAMAP" id="MF_01852">
    <property type="entry name" value="TsaC"/>
    <property type="match status" value="1"/>
</dbReference>
<dbReference type="InterPro" id="IPR017945">
    <property type="entry name" value="DHBP_synth_RibB-like_a/b_dom"/>
</dbReference>
<dbReference type="InterPro" id="IPR006070">
    <property type="entry name" value="Sua5-like_dom"/>
</dbReference>
<dbReference type="InterPro" id="IPR023535">
    <property type="entry name" value="TC-AMP_synthase"/>
</dbReference>
<dbReference type="InterPro" id="IPR050156">
    <property type="entry name" value="TC-AMP_synthase_SUA5"/>
</dbReference>
<dbReference type="PANTHER" id="PTHR17490">
    <property type="entry name" value="SUA5"/>
    <property type="match status" value="1"/>
</dbReference>
<dbReference type="PANTHER" id="PTHR17490:SF18">
    <property type="entry name" value="THREONYLCARBAMOYL-AMP SYNTHASE"/>
    <property type="match status" value="1"/>
</dbReference>
<dbReference type="Pfam" id="PF01300">
    <property type="entry name" value="Sua5_yciO_yrdC"/>
    <property type="match status" value="1"/>
</dbReference>
<dbReference type="SUPFAM" id="SSF55821">
    <property type="entry name" value="YrdC/RibB"/>
    <property type="match status" value="1"/>
</dbReference>
<dbReference type="PROSITE" id="PS51163">
    <property type="entry name" value="YRDC"/>
    <property type="match status" value="1"/>
</dbReference>
<comment type="function">
    <text evidence="1">Required for the formation of a threonylcarbamoyl group on adenosine at position 37 (t(6)A37) in tRNAs that read codons beginning with adenine. Catalyzes the conversion of L-threonine, HCO(3)(-)/CO(2) and ATP to give threonylcarbamoyl-AMP (TC-AMP) as the acyladenylate intermediate, with the release of diphosphate.</text>
</comment>
<comment type="catalytic activity">
    <reaction evidence="1">
        <text>L-threonine + hydrogencarbonate + ATP = L-threonylcarbamoyladenylate + diphosphate + H2O</text>
        <dbReference type="Rhea" id="RHEA:36407"/>
        <dbReference type="ChEBI" id="CHEBI:15377"/>
        <dbReference type="ChEBI" id="CHEBI:17544"/>
        <dbReference type="ChEBI" id="CHEBI:30616"/>
        <dbReference type="ChEBI" id="CHEBI:33019"/>
        <dbReference type="ChEBI" id="CHEBI:57926"/>
        <dbReference type="ChEBI" id="CHEBI:73682"/>
        <dbReference type="EC" id="2.7.7.87"/>
    </reaction>
</comment>
<comment type="subcellular location">
    <subcellularLocation>
        <location evidence="1">Cytoplasm</location>
    </subcellularLocation>
</comment>
<comment type="similarity">
    <text evidence="1">Belongs to the SUA5 family. TsaC subfamily.</text>
</comment>
<comment type="sequence caution" evidence="2">
    <conflict type="erroneous initiation">
        <sequence resource="EMBL-CDS" id="CAM07543"/>
    </conflict>
</comment>
<name>TSAC_NEIMA</name>
<organism>
    <name type="scientific">Neisseria meningitidis serogroup A / serotype 4A (strain DSM 15465 / Z2491)</name>
    <dbReference type="NCBI Taxonomy" id="122587"/>
    <lineage>
        <taxon>Bacteria</taxon>
        <taxon>Pseudomonadati</taxon>
        <taxon>Pseudomonadota</taxon>
        <taxon>Betaproteobacteria</taxon>
        <taxon>Neisseriales</taxon>
        <taxon>Neisseriaceae</taxon>
        <taxon>Neisseria</taxon>
    </lineage>
</organism>
<accession>A1IP83</accession>
<proteinExistence type="inferred from homology"/>